<reference key="1">
    <citation type="journal article" date="1999" name="DNA Res.">
        <title>Prediction of the coding sequences of unidentified human genes. XV. The complete sequences of 100 new cDNA clones from brain which code for large proteins in vitro.</title>
        <authorList>
            <person name="Nagase T."/>
            <person name="Ishikawa K."/>
            <person name="Kikuno R."/>
            <person name="Hirosawa M."/>
            <person name="Nomura N."/>
            <person name="Ohara O."/>
        </authorList>
    </citation>
    <scope>NUCLEOTIDE SEQUENCE [LARGE SCALE MRNA]</scope>
    <scope>TISSUE SPECIFICITY</scope>
    <source>
        <tissue>Brain</tissue>
    </source>
</reference>
<reference key="2">
    <citation type="submission" date="2005-07" db="EMBL/GenBank/DDBJ databases">
        <authorList>
            <person name="Mural R.J."/>
            <person name="Istrail S."/>
            <person name="Sutton G.G."/>
            <person name="Florea L."/>
            <person name="Halpern A.L."/>
            <person name="Mobarry C.M."/>
            <person name="Lippert R."/>
            <person name="Walenz B."/>
            <person name="Shatkay H."/>
            <person name="Dew I."/>
            <person name="Miller J.R."/>
            <person name="Flanigan M.J."/>
            <person name="Edwards N.J."/>
            <person name="Bolanos R."/>
            <person name="Fasulo D."/>
            <person name="Halldorsson B.V."/>
            <person name="Hannenhalli S."/>
            <person name="Turner R."/>
            <person name="Yooseph S."/>
            <person name="Lu F."/>
            <person name="Nusskern D.R."/>
            <person name="Shue B.C."/>
            <person name="Zheng X.H."/>
            <person name="Zhong F."/>
            <person name="Delcher A.L."/>
            <person name="Huson D.H."/>
            <person name="Kravitz S.A."/>
            <person name="Mouchard L."/>
            <person name="Reinert K."/>
            <person name="Remington K.A."/>
            <person name="Clark A.G."/>
            <person name="Waterman M.S."/>
            <person name="Eichler E.E."/>
            <person name="Adams M.D."/>
            <person name="Hunkapiller M.W."/>
            <person name="Myers E.W."/>
            <person name="Venter J.C."/>
        </authorList>
    </citation>
    <scope>NUCLEOTIDE SEQUENCE [LARGE SCALE GENOMIC DNA]</scope>
</reference>
<reference key="3">
    <citation type="journal article" date="2004" name="Genome Res.">
        <title>The status, quality, and expansion of the NIH full-length cDNA project: the Mammalian Gene Collection (MGC).</title>
        <authorList>
            <consortium name="The MGC Project Team"/>
        </authorList>
    </citation>
    <scope>NUCLEOTIDE SEQUENCE [LARGE SCALE MRNA]</scope>
</reference>
<reference key="4">
    <citation type="journal article" date="2007" name="BMC Genomics">
        <title>The full-ORF clone resource of the German cDNA consortium.</title>
        <authorList>
            <person name="Bechtel S."/>
            <person name="Rosenfelder H."/>
            <person name="Duda A."/>
            <person name="Schmidt C.P."/>
            <person name="Ernst U."/>
            <person name="Wellenreuther R."/>
            <person name="Mehrle A."/>
            <person name="Schuster C."/>
            <person name="Bahr A."/>
            <person name="Bloecker H."/>
            <person name="Heubner D."/>
            <person name="Hoerlein A."/>
            <person name="Michel G."/>
            <person name="Wedler H."/>
            <person name="Koehrer K."/>
            <person name="Ottenwaelder B."/>
            <person name="Poustka A."/>
            <person name="Wiemann S."/>
            <person name="Schupp I."/>
        </authorList>
    </citation>
    <scope>NUCLEOTIDE SEQUENCE [LARGE SCALE MRNA] OF 1302-1556</scope>
    <source>
        <tissue>Testis</tissue>
    </source>
</reference>
<reference key="5">
    <citation type="journal article" date="2005" name="J. Biol. Chem.">
        <title>A mammalian chromatin remodeling complex with similarities to the yeast INO80 complex.</title>
        <authorList>
            <person name="Jin J."/>
            <person name="Cai Y."/>
            <person name="Yao T."/>
            <person name="Gottschalk A.J."/>
            <person name="Florens L."/>
            <person name="Swanson S.K."/>
            <person name="Gutierrez J.L."/>
            <person name="Coleman M.K."/>
            <person name="Workman J.L."/>
            <person name="Mushegian A."/>
            <person name="Washburn M.P."/>
            <person name="Conaway R.C."/>
            <person name="Conaway J.W."/>
        </authorList>
    </citation>
    <scope>FUNCTION</scope>
    <scope>IDENTIFICATION IN INO80 COMPLEX</scope>
    <scope>IDENTIFICATION BY MASS SPECTROMETRY</scope>
</reference>
<reference key="6">
    <citation type="journal article" date="2006" name="Biochem. Biophys. Res. Commun.">
        <title>Characterization of a human SWI2/SNF2 like protein hINO80: demonstration of catalytic and DNA binding activity.</title>
        <authorList>
            <person name="Bakshi R."/>
            <person name="Mehta A.K."/>
            <person name="Sharma R."/>
            <person name="Maiti S."/>
            <person name="Pasha S."/>
            <person name="Brahmachari V."/>
        </authorList>
    </citation>
    <scope>FUNCTION</scope>
    <scope>CATALYTIC ACTIVITY</scope>
    <scope>ACTIVITY REGULATION</scope>
    <scope>BIOPHYSICOCHEMICAL PROPERTIES</scope>
    <scope>DNA-BINDING</scope>
    <scope>TISSUE SPECIFICITY</scope>
    <scope>SUBCELLULAR LOCATION</scope>
</reference>
<reference key="7">
    <citation type="journal article" date="2007" name="Nat. Struct. Mol. Biol.">
        <title>YY1 functions with INO80 to activate transcription.</title>
        <authorList>
            <person name="Cai Y."/>
            <person name="Jin J."/>
            <person name="Yao T."/>
            <person name="Gottschalk A.J."/>
            <person name="Swanson S.K."/>
            <person name="Wu S."/>
            <person name="Shi Y."/>
            <person name="Washburn M.P."/>
            <person name="Florens L."/>
            <person name="Conaway R.C."/>
            <person name="Conaway J.W."/>
        </authorList>
    </citation>
    <scope>FUNCTION</scope>
    <scope>INTERACTION WITH YY1</scope>
</reference>
<reference key="8">
    <citation type="journal article" date="2007" name="Nat. Struct. Mol. Biol.">
        <title>A YY1-INO80 complex regulates genomic stability through homologous recombination-based repair.</title>
        <authorList>
            <person name="Wu S."/>
            <person name="Shi Y."/>
            <person name="Mulligan P."/>
            <person name="Gay F."/>
            <person name="Landry J."/>
            <person name="Liu H."/>
            <person name="Lu J."/>
            <person name="Qi H.H."/>
            <person name="Wang W."/>
            <person name="Nickoloff J.A."/>
            <person name="Wu C."/>
            <person name="Shi Y."/>
        </authorList>
    </citation>
    <scope>SUBCELLULAR LOCATION</scope>
    <scope>IDENTIFICATION IN THE INO80 COMPLEX</scope>
    <scope>INTERACTION WITH YY1</scope>
</reference>
<reference key="9">
    <citation type="journal article" date="2008" name="Mol. Cell">
        <title>Distinct modes of regulation of the Uch37 deubiquitinating enzyme in the proteasome and in the Ino80 chromatin-remodeling complex.</title>
        <authorList>
            <person name="Yao T."/>
            <person name="Song L."/>
            <person name="Jin J."/>
            <person name="Cai Y."/>
            <person name="Takahashi H."/>
            <person name="Swanson S.K."/>
            <person name="Washburn M.P."/>
            <person name="Florens L."/>
            <person name="Conaway R.C."/>
            <person name="Cohen R.E."/>
            <person name="Conaway J.W."/>
        </authorList>
    </citation>
    <scope>IDENTIFICATION IN THE INO80 COMPLEX</scope>
    <scope>IDENTIFICATION BY MASS SPECTROMETRY</scope>
</reference>
<reference key="10">
    <citation type="journal article" date="2008" name="Proc. Natl. Acad. Sci. U.S.A.">
        <title>A quantitative atlas of mitotic phosphorylation.</title>
        <authorList>
            <person name="Dephoure N."/>
            <person name="Zhou C."/>
            <person name="Villen J."/>
            <person name="Beausoleil S.A."/>
            <person name="Bakalarski C.E."/>
            <person name="Elledge S.J."/>
            <person name="Gygi S.P."/>
        </authorList>
    </citation>
    <scope>PHOSPHORYLATION [LARGE SCALE ANALYSIS] AT SER-1512</scope>
    <scope>IDENTIFICATION BY MASS SPECTROMETRY [LARGE SCALE ANALYSIS]</scope>
    <source>
        <tissue>Cervix carcinoma</tissue>
    </source>
</reference>
<reference key="11">
    <citation type="journal article" date="2009" name="Sci. Signal.">
        <title>Quantitative phosphoproteomic analysis of T cell receptor signaling reveals system-wide modulation of protein-protein interactions.</title>
        <authorList>
            <person name="Mayya V."/>
            <person name="Lundgren D.H."/>
            <person name="Hwang S.-I."/>
            <person name="Rezaul K."/>
            <person name="Wu L."/>
            <person name="Eng J.K."/>
            <person name="Rodionov V."/>
            <person name="Han D.K."/>
        </authorList>
    </citation>
    <scope>IDENTIFICATION BY MASS SPECTROMETRY [LARGE SCALE ANALYSIS]</scope>
    <source>
        <tissue>Leukemic T-cell</tissue>
    </source>
</reference>
<reference key="12">
    <citation type="journal article" date="2009" name="Science">
        <title>Lysine acetylation targets protein complexes and co-regulates major cellular functions.</title>
        <authorList>
            <person name="Choudhary C."/>
            <person name="Kumar C."/>
            <person name="Gnad F."/>
            <person name="Nielsen M.L."/>
            <person name="Rehman M."/>
            <person name="Walther T.C."/>
            <person name="Olsen J.V."/>
            <person name="Mann M."/>
        </authorList>
    </citation>
    <scope>ACETYLATION [LARGE SCALE ANALYSIS] AT LYS-118</scope>
    <scope>IDENTIFICATION BY MASS SPECTROMETRY [LARGE SCALE ANALYSIS]</scope>
</reference>
<reference key="13">
    <citation type="journal article" date="2010" name="Biochem. Biophys. Res. Commun.">
        <title>The mammalian INO80 complex is recruited to DNA damage sites in an ARP8 dependent manner.</title>
        <authorList>
            <person name="Kashiwaba S."/>
            <person name="Kitahashi K."/>
            <person name="Watanabe T."/>
            <person name="Onoda F."/>
            <person name="Ohtsu M."/>
            <person name="Murakami Y."/>
        </authorList>
    </citation>
    <scope>SUBCELLULAR LOCATION</scope>
</reference>
<reference key="14">
    <citation type="journal article" date="2010" name="Biochem. J.">
        <title>Human INO80 chromatin-remodelling complex contributes to DNA double-strand break repair via the expression of Rad54B and XRCC3 genes.</title>
        <authorList>
            <person name="Park E.J."/>
            <person name="Hur S.K."/>
            <person name="Kwon J."/>
        </authorList>
    </citation>
    <scope>FUNCTION IN DNA REPAIR</scope>
</reference>
<reference key="15">
    <citation type="journal article" date="2010" name="Cell. Mol. Life Sci.">
        <title>Roles of human INO80 chromatin remodeling enzyme in DNA replication and chromosome segregation suppress genome instability.</title>
        <authorList>
            <person name="Hur S.K."/>
            <person name="Park E.J."/>
            <person name="Han J.E."/>
            <person name="Kim Y.A."/>
            <person name="Kim J.D."/>
            <person name="Kang D."/>
            <person name="Kwon J."/>
        </authorList>
    </citation>
    <scope>FUNCTION</scope>
    <scope>INTERACTION WITH TUBULIN ALPHA</scope>
    <scope>SUBCELLULAR LOCATION</scope>
</reference>
<reference key="16">
    <citation type="journal article" date="2010" name="Proc. Natl. Acad. Sci. U.S.A.">
        <title>INO80 chromatin remodeling complex promotes the removal of UV lesions by the nucleotide excision repair pathway.</title>
        <authorList>
            <person name="Jiang Y."/>
            <person name="Wang X."/>
            <person name="Bao S."/>
            <person name="Guo R."/>
            <person name="Johnson D.G."/>
            <person name="Shen X."/>
            <person name="Li L."/>
        </authorList>
    </citation>
    <scope>FUNCTION IN DNA REPAIR</scope>
    <scope>INTERACTION WITH DDB1</scope>
    <scope>FUNCTION OF THE INO80 COMPLEX</scope>
</reference>
<reference key="17">
    <citation type="journal article" date="2011" name="J. Biol. Chem.">
        <title>Subunit organization of the human INO80 chromatin remodeling complex: An evolutionarily conserved core complex catalyzes ATP-dependent nucleosome remodeling.</title>
        <authorList>
            <person name="Chen L."/>
            <person name="Cai Y."/>
            <person name="Jin J."/>
            <person name="Florens L."/>
            <person name="Swanson S.K."/>
            <person name="Washburn M.P."/>
            <person name="Conaway J.W."/>
            <person name="Conaway R.C."/>
        </authorList>
    </citation>
    <scope>FUNCTION</scope>
    <scope>CATALYTIC ACTIVITY</scope>
    <scope>ACTIVITY REGULATION</scope>
    <scope>IDENTIFICATION IN THE INO80 COMPLEX</scope>
    <scope>MUTAGENESIS OF GLU-653</scope>
</reference>
<reference key="18">
    <citation type="journal article" date="2017" name="Am. J. Hum. Genet.">
        <title>Loss-of-function mutations in YY1AP1 lead to Grange Syndrome and a fibromuscular dysplasia-like vascular disease.</title>
        <authorList>
            <consortium name="University of Washington Center for Mendelian Genomics"/>
            <person name="Guo D.C."/>
            <person name="Duan X.Y."/>
            <person name="Regalado E.S."/>
            <person name="Mellor-Crummey L."/>
            <person name="Kwartler C.S."/>
            <person name="Kim D."/>
            <person name="Lieberman K."/>
            <person name="de Vries B.B."/>
            <person name="Pfundt R."/>
            <person name="Schinzel A."/>
            <person name="Kotzot D."/>
            <person name="Shen X."/>
            <person name="Yang M.L."/>
            <person name="Bamshad M.J."/>
            <person name="Nickerson D.A."/>
            <person name="Gornik H.L."/>
            <person name="Ganesh S.K."/>
            <person name="Braverman A.C."/>
            <person name="Grange D.K."/>
            <person name="Milewicz D.M."/>
        </authorList>
    </citation>
    <scope>INTERACTION WITH YY1AP1</scope>
</reference>
<reference key="19">
    <citation type="journal article" date="2019" name="Life. Sci Alliance">
        <title>BZLF1 interacts with chromatin remodelers promoting escape from latent infections with EBV.</title>
        <authorList>
            <person name="Schaeffner M."/>
            <person name="Mrozek-Gorska P."/>
            <person name="Buschle A."/>
            <person name="Woellmer A."/>
            <person name="Tagawa T."/>
            <person name="Cernilogar F.M."/>
            <person name="Schotta G."/>
            <person name="Krietenstein N."/>
            <person name="Lieleg C."/>
            <person name="Korber P."/>
            <person name="Hammerschmidt W."/>
        </authorList>
    </citation>
    <scope>INTERACTION WITH EPSTEIN-BARR VIRUS BZLF1 (MICROBIAL INFECTION)</scope>
</reference>
<dbReference type="EC" id="3.6.4.-" evidence="7 15"/>
<dbReference type="EMBL" id="AB033085">
    <property type="protein sequence ID" value="BAA86573.1"/>
    <property type="status" value="ALT_INIT"/>
    <property type="molecule type" value="mRNA"/>
</dbReference>
<dbReference type="EMBL" id="CH471125">
    <property type="protein sequence ID" value="EAW92469.1"/>
    <property type="molecule type" value="Genomic_DNA"/>
</dbReference>
<dbReference type="EMBL" id="BC146785">
    <property type="protein sequence ID" value="AAI46786.1"/>
    <property type="molecule type" value="mRNA"/>
</dbReference>
<dbReference type="EMBL" id="AL137280">
    <property type="protein sequence ID" value="CAB70675.1"/>
    <property type="molecule type" value="mRNA"/>
</dbReference>
<dbReference type="CCDS" id="CCDS10071.1"/>
<dbReference type="PIR" id="T46350">
    <property type="entry name" value="T46350"/>
</dbReference>
<dbReference type="RefSeq" id="NP_060023.1">
    <property type="nucleotide sequence ID" value="NM_017553.3"/>
</dbReference>
<dbReference type="RefSeq" id="XP_047288654.1">
    <property type="nucleotide sequence ID" value="XM_047432698.1"/>
</dbReference>
<dbReference type="RefSeq" id="XP_054234202.1">
    <property type="nucleotide sequence ID" value="XM_054378227.1"/>
</dbReference>
<dbReference type="PDB" id="6HTS">
    <property type="method" value="EM"/>
    <property type="resolution" value="4.80 A"/>
    <property type="chains" value="G=267-1556"/>
</dbReference>
<dbReference type="PDB" id="7ZI4">
    <property type="method" value="EM"/>
    <property type="resolution" value="3.20 A"/>
    <property type="chains" value="G=1-1556"/>
</dbReference>
<dbReference type="PDBsum" id="6HTS"/>
<dbReference type="PDBsum" id="7ZI4"/>
<dbReference type="EMDB" id="EMD-14737"/>
<dbReference type="EMDB" id="EMD-3954"/>
<dbReference type="SMR" id="Q9ULG1"/>
<dbReference type="BioGRID" id="120076">
    <property type="interactions" value="96"/>
</dbReference>
<dbReference type="ComplexPortal" id="CPX-846">
    <property type="entry name" value="INO80 chromatin remodeling complex"/>
</dbReference>
<dbReference type="CORUM" id="Q9ULG1"/>
<dbReference type="DIP" id="DIP-34296N"/>
<dbReference type="FunCoup" id="Q9ULG1">
    <property type="interactions" value="4555"/>
</dbReference>
<dbReference type="IntAct" id="Q9ULG1">
    <property type="interactions" value="53"/>
</dbReference>
<dbReference type="MINT" id="Q9ULG1"/>
<dbReference type="STRING" id="9606.ENSP00000497609"/>
<dbReference type="GlyGen" id="Q9ULG1">
    <property type="glycosylation" value="2 sites, 1 O-linked glycan (2 sites)"/>
</dbReference>
<dbReference type="iPTMnet" id="Q9ULG1"/>
<dbReference type="PhosphoSitePlus" id="Q9ULG1"/>
<dbReference type="BioMuta" id="INO80"/>
<dbReference type="DMDM" id="114149322"/>
<dbReference type="jPOST" id="Q9ULG1"/>
<dbReference type="MassIVE" id="Q9ULG1"/>
<dbReference type="PaxDb" id="9606-ENSP00000355205"/>
<dbReference type="PeptideAtlas" id="Q9ULG1"/>
<dbReference type="ProteomicsDB" id="85013"/>
<dbReference type="Pumba" id="Q9ULG1"/>
<dbReference type="Antibodypedia" id="42067">
    <property type="antibodies" value="84 antibodies from 23 providers"/>
</dbReference>
<dbReference type="DNASU" id="54617"/>
<dbReference type="Ensembl" id="ENST00000648947.1">
    <property type="protein sequence ID" value="ENSP00000497609.1"/>
    <property type="gene ID" value="ENSG00000128908.19"/>
</dbReference>
<dbReference type="GeneID" id="54617"/>
<dbReference type="KEGG" id="hsa:54617"/>
<dbReference type="MANE-Select" id="ENST00000648947.1">
    <property type="protein sequence ID" value="ENSP00000497609.1"/>
    <property type="RefSeq nucleotide sequence ID" value="NM_017553.3"/>
    <property type="RefSeq protein sequence ID" value="NP_060023.1"/>
</dbReference>
<dbReference type="UCSC" id="uc001zni.5">
    <property type="organism name" value="human"/>
</dbReference>
<dbReference type="AGR" id="HGNC:26956"/>
<dbReference type="CTD" id="54617"/>
<dbReference type="DisGeNET" id="54617"/>
<dbReference type="GeneCards" id="INO80"/>
<dbReference type="HGNC" id="HGNC:26956">
    <property type="gene designation" value="INO80"/>
</dbReference>
<dbReference type="HPA" id="ENSG00000128908">
    <property type="expression patterns" value="Low tissue specificity"/>
</dbReference>
<dbReference type="MalaCards" id="INO80"/>
<dbReference type="MIM" id="610169">
    <property type="type" value="gene"/>
</dbReference>
<dbReference type="neXtProt" id="NX_Q9ULG1"/>
<dbReference type="OpenTargets" id="ENSG00000128908"/>
<dbReference type="Orphanet" id="157949">
    <property type="disease" value="Combined immunodeficiency with granulomatosis"/>
</dbReference>
<dbReference type="PharmGKB" id="PA162392040"/>
<dbReference type="VEuPathDB" id="HostDB:ENSG00000128908"/>
<dbReference type="eggNOG" id="KOG0388">
    <property type="taxonomic scope" value="Eukaryota"/>
</dbReference>
<dbReference type="GeneTree" id="ENSGT00900000141110"/>
<dbReference type="HOGENOM" id="CLU_000315_19_1_1"/>
<dbReference type="InParanoid" id="Q9ULG1"/>
<dbReference type="OMA" id="FWKKNER"/>
<dbReference type="OrthoDB" id="5847120at2759"/>
<dbReference type="PAN-GO" id="Q9ULG1">
    <property type="GO annotations" value="5 GO annotations based on evolutionary models"/>
</dbReference>
<dbReference type="PhylomeDB" id="Q9ULG1"/>
<dbReference type="TreeFam" id="TF324408"/>
<dbReference type="PathwayCommons" id="Q9ULG1"/>
<dbReference type="Reactome" id="R-HSA-5689603">
    <property type="pathway name" value="UCH proteinases"/>
</dbReference>
<dbReference type="Reactome" id="R-HSA-5696394">
    <property type="pathway name" value="DNA Damage Recognition in GG-NER"/>
</dbReference>
<dbReference type="SignaLink" id="Q9ULG1"/>
<dbReference type="SIGNOR" id="Q9ULG1"/>
<dbReference type="BioGRID-ORCS" id="54617">
    <property type="hits" value="524 hits in 1187 CRISPR screens"/>
</dbReference>
<dbReference type="ChiTaRS" id="INO80">
    <property type="organism name" value="human"/>
</dbReference>
<dbReference type="GenomeRNAi" id="54617"/>
<dbReference type="Pharos" id="Q9ULG1">
    <property type="development level" value="Tbio"/>
</dbReference>
<dbReference type="PRO" id="PR:Q9ULG1"/>
<dbReference type="Proteomes" id="UP000005640">
    <property type="component" value="Chromosome 15"/>
</dbReference>
<dbReference type="RNAct" id="Q9ULG1">
    <property type="molecule type" value="protein"/>
</dbReference>
<dbReference type="Bgee" id="ENSG00000128908">
    <property type="expression patterns" value="Expressed in cardiac muscle of right atrium and 191 other cell types or tissues"/>
</dbReference>
<dbReference type="ExpressionAtlas" id="Q9ULG1">
    <property type="expression patterns" value="baseline and differential"/>
</dbReference>
<dbReference type="GO" id="GO:0005829">
    <property type="term" value="C:cytosol"/>
    <property type="evidence" value="ECO:0000314"/>
    <property type="project" value="HPA"/>
</dbReference>
<dbReference type="GO" id="GO:0031011">
    <property type="term" value="C:Ino80 complex"/>
    <property type="evidence" value="ECO:0000314"/>
    <property type="project" value="UniProtKB"/>
</dbReference>
<dbReference type="GO" id="GO:0005874">
    <property type="term" value="C:microtubule"/>
    <property type="evidence" value="ECO:0007669"/>
    <property type="project" value="UniProtKB-KW"/>
</dbReference>
<dbReference type="GO" id="GO:0016604">
    <property type="term" value="C:nuclear body"/>
    <property type="evidence" value="ECO:0000314"/>
    <property type="project" value="HPA"/>
</dbReference>
<dbReference type="GO" id="GO:0005654">
    <property type="term" value="C:nucleoplasm"/>
    <property type="evidence" value="ECO:0000314"/>
    <property type="project" value="HPA"/>
</dbReference>
<dbReference type="GO" id="GO:0005634">
    <property type="term" value="C:nucleus"/>
    <property type="evidence" value="ECO:0000314"/>
    <property type="project" value="UniProtKB"/>
</dbReference>
<dbReference type="GO" id="GO:0005819">
    <property type="term" value="C:spindle"/>
    <property type="evidence" value="ECO:0007669"/>
    <property type="project" value="UniProtKB-SubCell"/>
</dbReference>
<dbReference type="GO" id="GO:0003779">
    <property type="term" value="F:actin binding"/>
    <property type="evidence" value="ECO:0007669"/>
    <property type="project" value="UniProtKB-KW"/>
</dbReference>
<dbReference type="GO" id="GO:0043014">
    <property type="term" value="F:alpha-tubulin binding"/>
    <property type="evidence" value="ECO:0000315"/>
    <property type="project" value="UniProtKB"/>
</dbReference>
<dbReference type="GO" id="GO:0005524">
    <property type="term" value="F:ATP binding"/>
    <property type="evidence" value="ECO:0007669"/>
    <property type="project" value="UniProtKB-KW"/>
</dbReference>
<dbReference type="GO" id="GO:0016887">
    <property type="term" value="F:ATP hydrolysis activity"/>
    <property type="evidence" value="ECO:0000318"/>
    <property type="project" value="GO_Central"/>
</dbReference>
<dbReference type="GO" id="GO:0008094">
    <property type="term" value="F:ATP-dependent activity, acting on DNA"/>
    <property type="evidence" value="ECO:0000314"/>
    <property type="project" value="UniProtKB"/>
</dbReference>
<dbReference type="GO" id="GO:0140658">
    <property type="term" value="F:ATP-dependent chromatin remodeler activity"/>
    <property type="evidence" value="ECO:0007669"/>
    <property type="project" value="InterPro"/>
</dbReference>
<dbReference type="GO" id="GO:0003677">
    <property type="term" value="F:DNA binding"/>
    <property type="evidence" value="ECO:0000314"/>
    <property type="project" value="UniProtKB"/>
</dbReference>
<dbReference type="GO" id="GO:0042393">
    <property type="term" value="F:histone binding"/>
    <property type="evidence" value="ECO:0000318"/>
    <property type="project" value="GO_Central"/>
</dbReference>
<dbReference type="GO" id="GO:0051301">
    <property type="term" value="P:cell division"/>
    <property type="evidence" value="ECO:0007669"/>
    <property type="project" value="UniProtKB-KW"/>
</dbReference>
<dbReference type="GO" id="GO:0071479">
    <property type="term" value="P:cellular response to ionizing radiation"/>
    <property type="evidence" value="ECO:0000315"/>
    <property type="project" value="UniProtKB"/>
</dbReference>
<dbReference type="GO" id="GO:0034644">
    <property type="term" value="P:cellular response to UV"/>
    <property type="evidence" value="ECO:0000315"/>
    <property type="project" value="UniProtKB"/>
</dbReference>
<dbReference type="GO" id="GO:0006338">
    <property type="term" value="P:chromatin remodeling"/>
    <property type="evidence" value="ECO:0000314"/>
    <property type="project" value="ComplexPortal"/>
</dbReference>
<dbReference type="GO" id="GO:0006281">
    <property type="term" value="P:DNA repair"/>
    <property type="evidence" value="ECO:0000318"/>
    <property type="project" value="GO_Central"/>
</dbReference>
<dbReference type="GO" id="GO:0006351">
    <property type="term" value="P:DNA-templated transcription"/>
    <property type="evidence" value="ECO:0007669"/>
    <property type="project" value="InterPro"/>
</dbReference>
<dbReference type="GO" id="GO:0006302">
    <property type="term" value="P:double-strand break repair"/>
    <property type="evidence" value="ECO:0000315"/>
    <property type="project" value="UniProtKB"/>
</dbReference>
<dbReference type="GO" id="GO:0000724">
    <property type="term" value="P:double-strand break repair via homologous recombination"/>
    <property type="evidence" value="ECO:0000315"/>
    <property type="project" value="UniProtKB"/>
</dbReference>
<dbReference type="GO" id="GO:0000070">
    <property type="term" value="P:mitotic sister chromatid segregation"/>
    <property type="evidence" value="ECO:0000315"/>
    <property type="project" value="UniProtKB"/>
</dbReference>
<dbReference type="GO" id="GO:0030307">
    <property type="term" value="P:positive regulation of cell growth"/>
    <property type="evidence" value="ECO:0000315"/>
    <property type="project" value="UniProtKB"/>
</dbReference>
<dbReference type="GO" id="GO:0045739">
    <property type="term" value="P:positive regulation of DNA repair"/>
    <property type="evidence" value="ECO:0000266"/>
    <property type="project" value="ComplexPortal"/>
</dbReference>
<dbReference type="GO" id="GO:0045893">
    <property type="term" value="P:positive regulation of DNA-templated transcription"/>
    <property type="evidence" value="ECO:0000315"/>
    <property type="project" value="ComplexPortal"/>
</dbReference>
<dbReference type="GO" id="GO:0010571">
    <property type="term" value="P:positive regulation of nuclear cell cycle DNA replication"/>
    <property type="evidence" value="ECO:0000315"/>
    <property type="project" value="UniProtKB"/>
</dbReference>
<dbReference type="GO" id="GO:1904507">
    <property type="term" value="P:positive regulation of telomere maintenance in response to DNA damage"/>
    <property type="evidence" value="ECO:0000266"/>
    <property type="project" value="ComplexPortal"/>
</dbReference>
<dbReference type="GO" id="GO:0045944">
    <property type="term" value="P:positive regulation of transcription by RNA polymerase II"/>
    <property type="evidence" value="ECO:0000315"/>
    <property type="project" value="UniProtKB"/>
</dbReference>
<dbReference type="GO" id="GO:0051726">
    <property type="term" value="P:regulation of cell cycle"/>
    <property type="evidence" value="ECO:0000315"/>
    <property type="project" value="ComplexPortal"/>
</dbReference>
<dbReference type="GO" id="GO:0033044">
    <property type="term" value="P:regulation of chromosome organization"/>
    <property type="evidence" value="ECO:0000315"/>
    <property type="project" value="ComplexPortal"/>
</dbReference>
<dbReference type="GO" id="GO:0006282">
    <property type="term" value="P:regulation of DNA repair"/>
    <property type="evidence" value="ECO:0000266"/>
    <property type="project" value="ComplexPortal"/>
</dbReference>
<dbReference type="GO" id="GO:0006275">
    <property type="term" value="P:regulation of DNA replication"/>
    <property type="evidence" value="ECO:0000315"/>
    <property type="project" value="ComplexPortal"/>
</dbReference>
<dbReference type="GO" id="GO:0060382">
    <property type="term" value="P:regulation of DNA strand elongation"/>
    <property type="evidence" value="ECO:0000315"/>
    <property type="project" value="ComplexPortal"/>
</dbReference>
<dbReference type="GO" id="GO:0045995">
    <property type="term" value="P:regulation of embryonic development"/>
    <property type="evidence" value="ECO:0000266"/>
    <property type="project" value="ComplexPortal"/>
</dbReference>
<dbReference type="GO" id="GO:2000045">
    <property type="term" value="P:regulation of G1/S transition of mitotic cell cycle"/>
    <property type="evidence" value="ECO:0000315"/>
    <property type="project" value="UniProtKB"/>
</dbReference>
<dbReference type="GO" id="GO:0051225">
    <property type="term" value="P:spindle assembly"/>
    <property type="evidence" value="ECO:0000315"/>
    <property type="project" value="UniProtKB"/>
</dbReference>
<dbReference type="GO" id="GO:0000723">
    <property type="term" value="P:telomere maintenance"/>
    <property type="evidence" value="ECO:0000266"/>
    <property type="project" value="ComplexPortal"/>
</dbReference>
<dbReference type="GO" id="GO:0070914">
    <property type="term" value="P:UV-damage excision repair"/>
    <property type="evidence" value="ECO:0000315"/>
    <property type="project" value="UniProtKB"/>
</dbReference>
<dbReference type="CDD" id="cd18002">
    <property type="entry name" value="DEXQc_INO80"/>
    <property type="match status" value="1"/>
</dbReference>
<dbReference type="CDD" id="cd18793">
    <property type="entry name" value="SF2_C_SNF"/>
    <property type="match status" value="1"/>
</dbReference>
<dbReference type="FunFam" id="3.40.50.300:FF:000747">
    <property type="entry name" value="DNA helicase INO80 isoform X1"/>
    <property type="match status" value="1"/>
</dbReference>
<dbReference type="FunFam" id="3.40.50.300:FF:003788">
    <property type="entry name" value="INO80 complex subunit"/>
    <property type="match status" value="1"/>
</dbReference>
<dbReference type="FunFam" id="3.40.50.10810:FF:000006">
    <property type="entry name" value="Putative DNA helicase INO80"/>
    <property type="match status" value="1"/>
</dbReference>
<dbReference type="Gene3D" id="3.40.50.300">
    <property type="entry name" value="P-loop containing nucleotide triphosphate hydrolases"/>
    <property type="match status" value="2"/>
</dbReference>
<dbReference type="Gene3D" id="3.40.50.10810">
    <property type="entry name" value="Tandem AAA-ATPase domain"/>
    <property type="match status" value="1"/>
</dbReference>
<dbReference type="InterPro" id="IPR020838">
    <property type="entry name" value="DBINO"/>
</dbReference>
<dbReference type="InterPro" id="IPR031047">
    <property type="entry name" value="DEXQc_INO80"/>
</dbReference>
<dbReference type="InterPro" id="IPR014001">
    <property type="entry name" value="Helicase_ATP-bd"/>
</dbReference>
<dbReference type="InterPro" id="IPR001650">
    <property type="entry name" value="Helicase_C-like"/>
</dbReference>
<dbReference type="InterPro" id="IPR050520">
    <property type="entry name" value="INO80/SWR1_helicase"/>
</dbReference>
<dbReference type="InterPro" id="IPR027417">
    <property type="entry name" value="P-loop_NTPase"/>
</dbReference>
<dbReference type="InterPro" id="IPR038718">
    <property type="entry name" value="SNF2-like_sf"/>
</dbReference>
<dbReference type="InterPro" id="IPR049730">
    <property type="entry name" value="SNF2/RAD54-like_C"/>
</dbReference>
<dbReference type="InterPro" id="IPR000330">
    <property type="entry name" value="SNF2_N"/>
</dbReference>
<dbReference type="PANTHER" id="PTHR45685:SF2">
    <property type="entry name" value="CHROMATIN-REMODELING ATPASE INO80"/>
    <property type="match status" value="1"/>
</dbReference>
<dbReference type="PANTHER" id="PTHR45685">
    <property type="entry name" value="HELICASE SRCAP-RELATED"/>
    <property type="match status" value="1"/>
</dbReference>
<dbReference type="Pfam" id="PF13892">
    <property type="entry name" value="DBINO"/>
    <property type="match status" value="1"/>
</dbReference>
<dbReference type="Pfam" id="PF00271">
    <property type="entry name" value="Helicase_C"/>
    <property type="match status" value="1"/>
</dbReference>
<dbReference type="Pfam" id="PF00176">
    <property type="entry name" value="SNF2-rel_dom"/>
    <property type="match status" value="1"/>
</dbReference>
<dbReference type="SMART" id="SM00487">
    <property type="entry name" value="DEXDc"/>
    <property type="match status" value="1"/>
</dbReference>
<dbReference type="SMART" id="SM00490">
    <property type="entry name" value="HELICc"/>
    <property type="match status" value="1"/>
</dbReference>
<dbReference type="SUPFAM" id="SSF52540">
    <property type="entry name" value="P-loop containing nucleoside triphosphate hydrolases"/>
    <property type="match status" value="2"/>
</dbReference>
<dbReference type="PROSITE" id="PS51413">
    <property type="entry name" value="DBINO"/>
    <property type="match status" value="1"/>
</dbReference>
<dbReference type="PROSITE" id="PS51192">
    <property type="entry name" value="HELICASE_ATP_BIND_1"/>
    <property type="match status" value="1"/>
</dbReference>
<dbReference type="PROSITE" id="PS51194">
    <property type="entry name" value="HELICASE_CTER"/>
    <property type="match status" value="1"/>
</dbReference>
<gene>
    <name type="primary">INO80</name>
    <name type="synonym">INO80A</name>
    <name type="synonym">INOC1</name>
    <name type="synonym">KIAA1259</name>
</gene>
<comment type="function">
    <text evidence="6 7 8 11 12 13 15">ATPase component of the chromatin remodeling INO80 complex which is involved in transcriptional regulation, DNA replication and DNA repair (PubMed:16230350, PubMed:16298340, PubMed:17721549, PubMed:20237820, PubMed:20855601). Binds DNA (PubMed:16298340, PubMed:21303910). As part of the INO80 complex, remodels chromatin by shifting nucleosomes (PubMed:16230350, PubMed:21303910). Regulates transcription upon recruitment by YY1 to YY1-activated genes, where it acts as an essential coactivator (PubMed:17721549). Involved in UV-damage excision DNA repair (PubMed:20855601). The contribution to DNA double-strand break repair appears to be largely indirect through transcriptional regulation (PubMed:20687897). Involved in DNA replication (PubMed:20237820). Required for microtubule assembly during mitosis thereby regulating chromosome segregation cycle (PubMed:20237820).</text>
</comment>
<comment type="catalytic activity">
    <reaction evidence="7 15">
        <text>ATP + H2O = ADP + phosphate + H(+)</text>
        <dbReference type="Rhea" id="RHEA:13065"/>
        <dbReference type="ChEBI" id="CHEBI:15377"/>
        <dbReference type="ChEBI" id="CHEBI:15378"/>
        <dbReference type="ChEBI" id="CHEBI:30616"/>
        <dbReference type="ChEBI" id="CHEBI:43474"/>
        <dbReference type="ChEBI" id="CHEBI:456216"/>
    </reaction>
</comment>
<comment type="activity regulation">
    <text evidence="7 15">Activated upon binding to double stranded DNA or nucleosomes.</text>
</comment>
<comment type="biophysicochemical properties">
    <kinetics>
        <KM evidence="7">167 uM for ATP</KM>
    </kinetics>
    <phDependence>
        <text evidence="7">Optimum pH is 7.</text>
    </phDependence>
    <temperatureDependence>
        <text evidence="7">Optimum temperature is 37 degrees Celsius.</text>
    </temperatureDependence>
</comment>
<comment type="subunit">
    <text evidence="6 8 9 10 11 13 15 16">Component of the chromatin remodeling INO80 complex; three different complex modules assemble on different domains of INO80 (PubMed:16230350, PubMed:18026119, PubMed:18922472, PubMed:21303910). Interacts with DDB1 (PubMed:20855601). Interacts with transcriptional repressor protein YY1; the interaction recruits the INO80 complex to YY1 target genes (PubMed:17721549, PubMed:18026119). Interacts with YY1AP1 (PubMed:27939641). Interacts with tubulin alpha (PubMed:20237820).</text>
</comment>
<comment type="subunit">
    <text evidence="17">(Microbial infection) Interacts with Epstein Barr virus (EBV) lytic switch protein BZLF1; this interaction participates to the activation of early lytic viral genes by BZLF1.</text>
</comment>
<comment type="interaction">
    <interactant intactId="EBI-769345">
        <id>Q9ULG1</id>
    </interactant>
    <interactant intactId="EBI-769418">
        <id>Q9H9F9</id>
        <label>ACTR5</label>
    </interactant>
    <organismsDiffer>false</organismsDiffer>
    <experiments>10</experiments>
</comment>
<comment type="interaction">
    <interactant intactId="EBI-769345">
        <id>Q9ULG1</id>
    </interactant>
    <interactant intactId="EBI-350322">
        <id>Q16531</id>
        <label>DDB1</label>
    </interactant>
    <organismsDiffer>false</organismsDiffer>
    <experiments>5</experiments>
</comment>
<comment type="interaction">
    <interactant intactId="EBI-769345">
        <id>Q9ULG1</id>
    </interactant>
    <interactant intactId="EBI-742388">
        <id>Q9H8W4</id>
        <label>PLEKHF2</label>
    </interactant>
    <organismsDiffer>false</organismsDiffer>
    <experiments>3</experiments>
</comment>
<comment type="interaction">
    <interactant intactId="EBI-769345">
        <id>Q9ULG1</id>
    </interactant>
    <interactant intactId="EBI-765538">
        <id>P25490</id>
        <label>YY1</label>
    </interactant>
    <organismsDiffer>false</organismsDiffer>
    <experiments>11</experiments>
</comment>
<comment type="subcellular location">
    <subcellularLocation>
        <location evidence="11">Cytoplasm</location>
    </subcellularLocation>
    <subcellularLocation>
        <location evidence="3 7 9 11 14">Nucleus</location>
    </subcellularLocation>
    <subcellularLocation>
        <location evidence="11">Cytoplasm</location>
        <location evidence="11">Cytoskeleton</location>
        <location evidence="11">Spindle</location>
    </subcellularLocation>
    <subcellularLocation>
        <location evidence="11">Chromosome</location>
    </subcellularLocation>
    <text evidence="11 14">Localizes to the cytoplasm in quiescent cell (PubMed:20237820). Associates with spindle microtubules during mitosis (PubMed:20237820). Colocalizes with PCNA at replication forks during S-phase (PubMed:20237820). Recruited to DNA damage sites in a ACTR8-dependent manner (PubMed:20971067).</text>
</comment>
<comment type="tissue specificity">
    <text evidence="5 7">According to PubMed:10574462, widely expressed. According to PubMed:16298340, specifically expressed in brain, liver and pancreas.</text>
</comment>
<comment type="domain">
    <text evidence="7">The DBINO region is involved in binding to DNA.</text>
</comment>
<comment type="miscellaneous">
    <text evidence="6">Although the ATP-dependent helicase activity displayed by the INO80 complex requires INO80 ATPase activity, it is likely that the helicase function is carried out by the other components of the complex, RUVBL1 and RUVBL2, and not by INO80 itself.</text>
</comment>
<comment type="similarity">
    <text evidence="18">Belongs to the SNF2/RAD54 helicase family.</text>
</comment>
<comment type="sequence caution" evidence="18">
    <conflict type="erroneous initiation">
        <sequence resource="EMBL-CDS" id="BAA86573"/>
    </conflict>
    <text>Extended N-terminus.</text>
</comment>
<proteinExistence type="evidence at protein level"/>
<feature type="chain" id="PRO_0000248829" description="Chromatin-remodeling ATPase INO80">
    <location>
        <begin position="1"/>
        <end position="1556"/>
    </location>
</feature>
<feature type="domain" description="DBINO" evidence="3">
    <location>
        <begin position="280"/>
        <end position="405"/>
    </location>
</feature>
<feature type="domain" description="Helicase ATP-binding" evidence="1">
    <location>
        <begin position="530"/>
        <end position="701"/>
    </location>
</feature>
<feature type="domain" description="Helicase C-terminal" evidence="2">
    <location>
        <begin position="1105"/>
        <end position="1260"/>
    </location>
</feature>
<feature type="region of interest" description="Assembles INO80 complex module with putative regulatory components INO80E, INO80F, UCHL5, NFRKB, MCRS1 and IN80D" evidence="15">
    <location>
        <begin position="1"/>
        <end position="266"/>
    </location>
</feature>
<feature type="region of interest" description="Disordered" evidence="4">
    <location>
        <begin position="46"/>
        <end position="87"/>
    </location>
</feature>
<feature type="region of interest" description="Assembles INO80 complex module consisting of conserved components ACTR8, ACTL6A and YY1" evidence="15">
    <location>
        <begin position="212"/>
        <end position="526"/>
    </location>
</feature>
<feature type="region of interest" description="Disordered" evidence="4">
    <location>
        <begin position="219"/>
        <end position="249"/>
    </location>
</feature>
<feature type="region of interest" description="Assembles INO80 complex module consisting of conserved components INO80B, INO80C, ACTR5, RVBL1, RVBL2" evidence="15">
    <location>
        <begin position="521"/>
        <end position="1556"/>
    </location>
</feature>
<feature type="region of interest" description="Disordered" evidence="4">
    <location>
        <begin position="1283"/>
        <end position="1316"/>
    </location>
</feature>
<feature type="region of interest" description="Disordered" evidence="4">
    <location>
        <begin position="1388"/>
        <end position="1408"/>
    </location>
</feature>
<feature type="region of interest" description="Disordered" evidence="4">
    <location>
        <begin position="1420"/>
        <end position="1461"/>
    </location>
</feature>
<feature type="region of interest" description="Disordered" evidence="4">
    <location>
        <begin position="1499"/>
        <end position="1556"/>
    </location>
</feature>
<feature type="compositionally biased region" description="Basic residues" evidence="4">
    <location>
        <begin position="219"/>
        <end position="230"/>
    </location>
</feature>
<feature type="compositionally biased region" description="Basic and acidic residues" evidence="4">
    <location>
        <begin position="1283"/>
        <end position="1294"/>
    </location>
</feature>
<feature type="compositionally biased region" description="Basic and acidic residues" evidence="4">
    <location>
        <begin position="1303"/>
        <end position="1316"/>
    </location>
</feature>
<feature type="compositionally biased region" description="Polar residues" evidence="4">
    <location>
        <begin position="1390"/>
        <end position="1408"/>
    </location>
</feature>
<feature type="compositionally biased region" description="Low complexity" evidence="4">
    <location>
        <begin position="1507"/>
        <end position="1519"/>
    </location>
</feature>
<feature type="binding site" evidence="1">
    <location>
        <begin position="543"/>
        <end position="550"/>
    </location>
    <ligand>
        <name>ATP</name>
        <dbReference type="ChEBI" id="CHEBI:30616"/>
    </ligand>
</feature>
<feature type="modified residue" description="N6-acetyllysine" evidence="20">
    <location>
        <position position="118"/>
    </location>
</feature>
<feature type="modified residue" description="Phosphoserine" evidence="19">
    <location>
        <position position="1512"/>
    </location>
</feature>
<feature type="sequence variant" id="VAR_049500" description="In dbSNP:rs34153025.">
    <original>I</original>
    <variation>V</variation>
    <location>
        <position position="882"/>
    </location>
</feature>
<feature type="sequence variant" id="VAR_061233" description="In dbSNP:rs34178030.">
    <original>V</original>
    <variation>G</variation>
    <location>
        <position position="1108"/>
    </location>
</feature>
<feature type="mutagenesis site" description="Abolishes DNA-dependent ATPase and nucleosome remodeling activities." evidence="15">
    <original>E</original>
    <variation>Q</variation>
    <location>
        <position position="653"/>
    </location>
</feature>
<sequence>MASELGARDDGGCTELAKPLYLQYLERALRLDHFLRQTSAIFNRNISSDDSEDGLDDSNPLLPQSGDPLIQVKEEPPNSLLGETSGAGSSGMLNTYSLNGVLQSESKCDKGNLYNFSKLKKSRKWLKSILLSDESSEADSQSEDDDEEELNLSREELHNMLRLHKYKKLHQNKYSKDKELQQYQYYSAGLLSTYDPFYEQQRHLLGPKKKKFKEEKKLKAKLKKVKKKRRRDEELSSEESPRRHHHQTKVFAKFSHDAPPPGTKKKHLSIEQLNARRRKVWLSIVKKELPKANKQKASARNLFLTNSRKLAHQCMKEVRRAALQAQKNCKETLPRARRLTKEMLLYWKKYEKVEKEHRKRAEKEALEQRKLDEEMREAKRQQRKLNFLITQTELYAHFMSRKRDMGHDGIQEEILRKLEDSSTQRQIDIGGGVVVNITQEDYDSNHFKAQALKNAENAYHIHQARTRSFDEDAKESRAAALRAANKSGTGFGESYSLANPSIRAGEDIPQPTIFNGKLKGYQLKGMNWLANLYEQGINGILADEMGLGKTVQSIALLAHLAERENIWGPFLIISPASTLNNWHQEFTRFVPKFKVLPYWGNPHDRKVIRRFWSQKTLYTQDAPFHVVITSYQLVVQDVKYFQRVKWQYMVLDEAQALKSSSSVRWKILLQFQCRNRLLLTGTPIQNTMAELWALLHFIMPTLFDSHEEFNEWFSKDIESHAENKSAIDENQLSRLHMILKPFMLRRIKKDVENELSDKIEILMYCQLTSRQKLLYQALKNKISIEDLLQSSMGSTQQAQNTTSSLMNLVMQFRKVCNHPELFERQETWSPFHISLKPYHISKFIYRHGQIRVFNHSRDRWLRVLSPFAPDYIQRSLFHRKGINEESCFSFLRFIDISPAEMANLMLQGLLARWLALFLSLKASYRLHQLRSWGAPEGESHQRYLRNKDFLLGVNFPLSFPNLCSCPLLKSLVFSSHCKAVSGYSDQVVHQRRSATSSLRRCLLTELPSFLCVASPRVTAVPLDSYCNDRSAEYERRVLKEGGSLAAKQCLLNGAPELAADWLNRRSQFFPEPAGGLWSIRPQNGWSFIRIPGKESLITDSGKLYALDVLLTRLKSQGHRVLIYSQMTRMIDLLEEYMVYRKHTYMRLDGSSKISERRDMVADFQNRNDIFVFLLSTRAGGLGINLTAADTVIFYDSDWNPTVDQQAMDRAHRLGQTKQVTVYRLICKGTIEERILQRAKEKSEIQRMVISGGNFKPDTLKPKEVVSLLLDDEELEKKLRLRQEEKRQQEETNRVKERKRKREKYAEKKKKEDELDGKRRKEGVNLVIPFVPSADNSNLSADGDDSFISVDSAMPSPFSEISISSELHTGSIPLDESSSDMLVIVDDPASSAPQSRATNSPASITGSVSDTVNGISIQEMPAAGRGHSARSRGRPKGSGSTAKGAGKGRSRKSTAGSAAAMAGAKAGAAAASAAAYAAYGYNVSKGISASSPLQTSLVRPAGLADFGPSSASSPLSSPLSKGNNVPGNPKNLHMTSSLAPDSLVRKQGKGTNPSGGR</sequence>
<keyword id="KW-0002">3D-structure</keyword>
<keyword id="KW-0007">Acetylation</keyword>
<keyword id="KW-0009">Actin-binding</keyword>
<keyword id="KW-0067">ATP-binding</keyword>
<keyword id="KW-0131">Cell cycle</keyword>
<keyword id="KW-0132">Cell division</keyword>
<keyword id="KW-0158">Chromosome</keyword>
<keyword id="KW-0963">Cytoplasm</keyword>
<keyword id="KW-0206">Cytoskeleton</keyword>
<keyword id="KW-0227">DNA damage</keyword>
<keyword id="KW-0233">DNA recombination</keyword>
<keyword id="KW-0234">DNA repair</keyword>
<keyword id="KW-0238">DNA-binding</keyword>
<keyword id="KW-0945">Host-virus interaction</keyword>
<keyword id="KW-0378">Hydrolase</keyword>
<keyword id="KW-0493">Microtubule</keyword>
<keyword id="KW-0498">Mitosis</keyword>
<keyword id="KW-0547">Nucleotide-binding</keyword>
<keyword id="KW-0539">Nucleus</keyword>
<keyword id="KW-0597">Phosphoprotein</keyword>
<keyword id="KW-1267">Proteomics identification</keyword>
<keyword id="KW-1185">Reference proteome</keyword>
<name>INO80_HUMAN</name>
<protein>
    <recommendedName>
        <fullName evidence="18">Chromatin-remodeling ATPase INO80</fullName>
        <shortName>hINO80</shortName>
        <ecNumber evidence="7 15">3.6.4.-</ecNumber>
    </recommendedName>
    <alternativeName>
        <fullName evidence="18">DNA helicase-related INO80 complex homolog 1</fullName>
    </alternativeName>
    <alternativeName>
        <fullName evidence="18">DNA helicase-related protein INO80</fullName>
    </alternativeName>
    <alternativeName>
        <fullName>INO80 complex subunit A</fullName>
    </alternativeName>
</protein>
<organism>
    <name type="scientific">Homo sapiens</name>
    <name type="common">Human</name>
    <dbReference type="NCBI Taxonomy" id="9606"/>
    <lineage>
        <taxon>Eukaryota</taxon>
        <taxon>Metazoa</taxon>
        <taxon>Chordata</taxon>
        <taxon>Craniata</taxon>
        <taxon>Vertebrata</taxon>
        <taxon>Euteleostomi</taxon>
        <taxon>Mammalia</taxon>
        <taxon>Eutheria</taxon>
        <taxon>Euarchontoglires</taxon>
        <taxon>Primates</taxon>
        <taxon>Haplorrhini</taxon>
        <taxon>Catarrhini</taxon>
        <taxon>Hominidae</taxon>
        <taxon>Homo</taxon>
    </lineage>
</organism>
<accession>Q9ULG1</accession>
<accession>A6H8X4</accession>
<accession>Q9NTG6</accession>
<evidence type="ECO:0000255" key="1">
    <source>
        <dbReference type="PROSITE-ProRule" id="PRU00541"/>
    </source>
</evidence>
<evidence type="ECO:0000255" key="2">
    <source>
        <dbReference type="PROSITE-ProRule" id="PRU00542"/>
    </source>
</evidence>
<evidence type="ECO:0000255" key="3">
    <source>
        <dbReference type="PROSITE-ProRule" id="PRU00746"/>
    </source>
</evidence>
<evidence type="ECO:0000256" key="4">
    <source>
        <dbReference type="SAM" id="MobiDB-lite"/>
    </source>
</evidence>
<evidence type="ECO:0000269" key="5">
    <source>
    </source>
</evidence>
<evidence type="ECO:0000269" key="6">
    <source>
    </source>
</evidence>
<evidence type="ECO:0000269" key="7">
    <source>
    </source>
</evidence>
<evidence type="ECO:0000269" key="8">
    <source>
    </source>
</evidence>
<evidence type="ECO:0000269" key="9">
    <source>
    </source>
</evidence>
<evidence type="ECO:0000269" key="10">
    <source>
    </source>
</evidence>
<evidence type="ECO:0000269" key="11">
    <source>
    </source>
</evidence>
<evidence type="ECO:0000269" key="12">
    <source>
    </source>
</evidence>
<evidence type="ECO:0000269" key="13">
    <source>
    </source>
</evidence>
<evidence type="ECO:0000269" key="14">
    <source>
    </source>
</evidence>
<evidence type="ECO:0000269" key="15">
    <source>
    </source>
</evidence>
<evidence type="ECO:0000269" key="16">
    <source>
    </source>
</evidence>
<evidence type="ECO:0000269" key="17">
    <source>
    </source>
</evidence>
<evidence type="ECO:0000305" key="18"/>
<evidence type="ECO:0007744" key="19">
    <source>
    </source>
</evidence>
<evidence type="ECO:0007744" key="20">
    <source>
    </source>
</evidence>